<keyword id="KW-0256">Endoplasmic reticulum</keyword>
<keyword id="KW-0333">Golgi apparatus</keyword>
<keyword id="KW-0472">Membrane</keyword>
<keyword id="KW-0653">Protein transport</keyword>
<keyword id="KW-1185">Reference proteome</keyword>
<keyword id="KW-0812">Transmembrane</keyword>
<keyword id="KW-1133">Transmembrane helix</keyword>
<keyword id="KW-0813">Transport</keyword>
<gene>
    <name evidence="1" type="primary">SURF4</name>
</gene>
<accession>Q5R705</accession>
<name>SURF4_PONAB</name>
<comment type="function">
    <text evidence="1">Endoplasmic reticulum cargo receptor that mediates the export of lipoproteins by recruiting cargos into COPII vesicles to facilitate their secretion. Acts as a cargo receptor for lipoproteins bearing both APOB and APOA1, thereby regulating lipoprotein delivery and the maintenance of lipid homeostasis. Synergizes with the GTPase SAR1B to mediate transport of circulating lipoproteins. Promotes the secretion of PCSK9. Also mediates the efficient secretion of erythropoietin (EPO). May also play a role in the maintenance of the architecture of the endoplasmic reticulum-Golgi intermediate compartment and of the Golgi.</text>
</comment>
<comment type="subunit">
    <text evidence="1 2">Found in a complex composed at least of SURF4, TMED2 and TMED10. May interact with LMAN1 (By similarity). Interacts with ZFYVE27 and with KIF5A in a ZFYVE27-dependent manner (By similarity). Interacts with STING1. Interacts with SAR1B. Interacts with TMEM41B (By similarity).</text>
</comment>
<comment type="subcellular location">
    <subcellularLocation>
        <location evidence="1">Endoplasmic reticulum membrane</location>
        <topology evidence="3">Multi-pass membrane protein</topology>
    </subcellularLocation>
    <subcellularLocation>
        <location evidence="1">Endoplasmic reticulum-Golgi intermediate compartment membrane</location>
        <topology evidence="3">Multi-pass membrane protein</topology>
    </subcellularLocation>
    <subcellularLocation>
        <location evidence="1">Golgi apparatus membrane</location>
        <topology evidence="3">Multi-pass membrane protein</topology>
    </subcellularLocation>
    <text evidence="1">Active at endoplasmic reticulum exit sites (ERES) where it is incorporated together with its lipoprotein cargos into COPII-coated vesicles. From the Golgi it is recycled back to the endoplasmic reticulum.</text>
</comment>
<comment type="domain">
    <text evidence="1">The di-lysine motif confers endoplasmic reticulum localization for type I membrane proteins.</text>
</comment>
<comment type="similarity">
    <text evidence="4">Belongs to the SURF4 family.</text>
</comment>
<dbReference type="EMBL" id="CR860318">
    <property type="protein sequence ID" value="CAH92455.1"/>
    <property type="molecule type" value="mRNA"/>
</dbReference>
<dbReference type="RefSeq" id="NP_001126447.1">
    <property type="nucleotide sequence ID" value="NM_001132975.1"/>
</dbReference>
<dbReference type="FunCoup" id="Q5R705">
    <property type="interactions" value="2696"/>
</dbReference>
<dbReference type="STRING" id="9601.ENSPPYP00000022130"/>
<dbReference type="Ensembl" id="ENSPPYT00000057041.1">
    <property type="protein sequence ID" value="ENSPPYP00000026839.1"/>
    <property type="gene ID" value="ENSPPYG00000019733.2"/>
</dbReference>
<dbReference type="GeneID" id="100173432"/>
<dbReference type="KEGG" id="pon:100173432"/>
<dbReference type="CTD" id="6836"/>
<dbReference type="eggNOG" id="KOG3998">
    <property type="taxonomic scope" value="Eukaryota"/>
</dbReference>
<dbReference type="GeneTree" id="ENSGT00530000064123"/>
<dbReference type="HOGENOM" id="CLU_056195_0_0_1"/>
<dbReference type="InParanoid" id="Q5R705"/>
<dbReference type="OMA" id="SSPRQYM"/>
<dbReference type="OrthoDB" id="7859621at2759"/>
<dbReference type="Proteomes" id="UP000001595">
    <property type="component" value="Chromosome 9"/>
</dbReference>
<dbReference type="GO" id="GO:0030134">
    <property type="term" value="C:COPII-coated ER to Golgi transport vesicle"/>
    <property type="evidence" value="ECO:0007669"/>
    <property type="project" value="Ensembl"/>
</dbReference>
<dbReference type="GO" id="GO:0005829">
    <property type="term" value="C:cytosol"/>
    <property type="evidence" value="ECO:0007669"/>
    <property type="project" value="Ensembl"/>
</dbReference>
<dbReference type="GO" id="GO:0070971">
    <property type="term" value="C:endoplasmic reticulum exit site"/>
    <property type="evidence" value="ECO:0007669"/>
    <property type="project" value="Ensembl"/>
</dbReference>
<dbReference type="GO" id="GO:0005789">
    <property type="term" value="C:endoplasmic reticulum membrane"/>
    <property type="evidence" value="ECO:0007669"/>
    <property type="project" value="UniProtKB-SubCell"/>
</dbReference>
<dbReference type="GO" id="GO:0033116">
    <property type="term" value="C:endoplasmic reticulum-Golgi intermediate compartment membrane"/>
    <property type="evidence" value="ECO:0007669"/>
    <property type="project" value="UniProtKB-SubCell"/>
</dbReference>
<dbReference type="GO" id="GO:0000139">
    <property type="term" value="C:Golgi membrane"/>
    <property type="evidence" value="ECO:0007669"/>
    <property type="project" value="UniProtKB-SubCell"/>
</dbReference>
<dbReference type="GO" id="GO:0031965">
    <property type="term" value="C:nuclear membrane"/>
    <property type="evidence" value="ECO:0007669"/>
    <property type="project" value="Ensembl"/>
</dbReference>
<dbReference type="GO" id="GO:0038024">
    <property type="term" value="F:cargo receptor activity"/>
    <property type="evidence" value="ECO:0000250"/>
    <property type="project" value="UniProtKB"/>
</dbReference>
<dbReference type="GO" id="GO:0097020">
    <property type="term" value="F:COPII receptor activity"/>
    <property type="evidence" value="ECO:0007669"/>
    <property type="project" value="Ensembl"/>
</dbReference>
<dbReference type="GO" id="GO:0090110">
    <property type="term" value="P:COPII-coated vesicle cargo loading"/>
    <property type="evidence" value="ECO:0007669"/>
    <property type="project" value="Ensembl"/>
</dbReference>
<dbReference type="GO" id="GO:0006888">
    <property type="term" value="P:endoplasmic reticulum to Golgi vesicle-mediated transport"/>
    <property type="evidence" value="ECO:0000250"/>
    <property type="project" value="UniProtKB"/>
</dbReference>
<dbReference type="GO" id="GO:0007030">
    <property type="term" value="P:Golgi organization"/>
    <property type="evidence" value="ECO:0007669"/>
    <property type="project" value="Ensembl"/>
</dbReference>
<dbReference type="GO" id="GO:0140353">
    <property type="term" value="P:lipid export from cell"/>
    <property type="evidence" value="ECO:0007669"/>
    <property type="project" value="Ensembl"/>
</dbReference>
<dbReference type="GO" id="GO:0055088">
    <property type="term" value="P:lipid homeostasis"/>
    <property type="evidence" value="ECO:0000250"/>
    <property type="project" value="UniProtKB"/>
</dbReference>
<dbReference type="GO" id="GO:0042953">
    <property type="term" value="P:lipoprotein transport"/>
    <property type="evidence" value="ECO:0000250"/>
    <property type="project" value="UniProtKB"/>
</dbReference>
<dbReference type="GO" id="GO:0010638">
    <property type="term" value="P:positive regulation of organelle organization"/>
    <property type="evidence" value="ECO:0007669"/>
    <property type="project" value="Ensembl"/>
</dbReference>
<dbReference type="GO" id="GO:0032368">
    <property type="term" value="P:regulation of lipid transport"/>
    <property type="evidence" value="ECO:0000250"/>
    <property type="project" value="UniProtKB"/>
</dbReference>
<dbReference type="InterPro" id="IPR045214">
    <property type="entry name" value="Surf1/Surf4"/>
</dbReference>
<dbReference type="InterPro" id="IPR002995">
    <property type="entry name" value="Surf4"/>
</dbReference>
<dbReference type="PANTHER" id="PTHR23427">
    <property type="entry name" value="SURFEIT LOCUS PROTEIN"/>
    <property type="match status" value="1"/>
</dbReference>
<dbReference type="PANTHER" id="PTHR23427:SF13">
    <property type="entry name" value="SURFEIT LOCUS PROTEIN 4"/>
    <property type="match status" value="1"/>
</dbReference>
<dbReference type="Pfam" id="PF02077">
    <property type="entry name" value="SURF4"/>
    <property type="match status" value="1"/>
</dbReference>
<dbReference type="PROSITE" id="PS01339">
    <property type="entry name" value="SURF4"/>
    <property type="match status" value="1"/>
</dbReference>
<organism>
    <name type="scientific">Pongo abelii</name>
    <name type="common">Sumatran orangutan</name>
    <name type="synonym">Pongo pygmaeus abelii</name>
    <dbReference type="NCBI Taxonomy" id="9601"/>
    <lineage>
        <taxon>Eukaryota</taxon>
        <taxon>Metazoa</taxon>
        <taxon>Chordata</taxon>
        <taxon>Craniata</taxon>
        <taxon>Vertebrata</taxon>
        <taxon>Euteleostomi</taxon>
        <taxon>Mammalia</taxon>
        <taxon>Eutheria</taxon>
        <taxon>Euarchontoglires</taxon>
        <taxon>Primates</taxon>
        <taxon>Haplorrhini</taxon>
        <taxon>Catarrhini</taxon>
        <taxon>Hominidae</taxon>
        <taxon>Pongo</taxon>
    </lineage>
</organism>
<evidence type="ECO:0000250" key="1">
    <source>
        <dbReference type="UniProtKB" id="O15260"/>
    </source>
</evidence>
<evidence type="ECO:0000250" key="2">
    <source>
        <dbReference type="UniProtKB" id="Q64310"/>
    </source>
</evidence>
<evidence type="ECO:0000255" key="3"/>
<evidence type="ECO:0000305" key="4"/>
<feature type="chain" id="PRO_0000290004" description="Surfeit locus protein 4">
    <location>
        <begin position="1"/>
        <end position="269"/>
    </location>
</feature>
<feature type="transmembrane region" description="Helical" evidence="3">
    <location>
        <begin position="64"/>
        <end position="84"/>
    </location>
</feature>
<feature type="transmembrane region" description="Helical" evidence="3">
    <location>
        <begin position="92"/>
        <end position="112"/>
    </location>
</feature>
<feature type="transmembrane region" description="Helical" evidence="3">
    <location>
        <begin position="179"/>
        <end position="199"/>
    </location>
</feature>
<feature type="transmembrane region" description="Helical" evidence="3">
    <location>
        <begin position="203"/>
        <end position="223"/>
    </location>
</feature>
<feature type="transmembrane region" description="Helical" evidence="3">
    <location>
        <begin position="239"/>
        <end position="259"/>
    </location>
</feature>
<feature type="short sequence motif" description="Di-lysine motif" evidence="1">
    <location>
        <begin position="266"/>
        <end position="269"/>
    </location>
</feature>
<sequence length="269" mass="30394">MGQNDLMGTAEDFADQFLRVTKQYLPHVARLCLISTFLEDGIRMWFQWSEQRDYIDTTWNCGYLLASSFVFLNLLGQLTGCVLVLSRNFVQYACFGLFGIIALQTIAYSILWDLKFLMRNLALGGGLLLLLAESRSEGKSMFAGVPTMRESSPKQYMQLGGRVLLVLMFMTLLHFDASFFSIVQNIVGTALMILVAIGFKTKLAALTLVVWLFAINVYFNAFWTIPVYKPMHDFLKYDFFQTMSVIGGLLLVVALGPGGVSMDEKKKEW</sequence>
<protein>
    <recommendedName>
        <fullName evidence="4">Surfeit locus protein 4</fullName>
    </recommendedName>
</protein>
<reference key="1">
    <citation type="submission" date="2004-11" db="EMBL/GenBank/DDBJ databases">
        <authorList>
            <consortium name="The German cDNA consortium"/>
        </authorList>
    </citation>
    <scope>NUCLEOTIDE SEQUENCE [LARGE SCALE MRNA]</scope>
    <source>
        <tissue>Brain cortex</tissue>
    </source>
</reference>
<proteinExistence type="evidence at transcript level"/>